<keyword id="KW-0012">Acyltransferase</keyword>
<keyword id="KW-0903">Direct protein sequencing</keyword>
<keyword id="KW-0496">Mitochondrion</keyword>
<keyword id="KW-1185">Reference proteome</keyword>
<keyword id="KW-0808">Transferase</keyword>
<dbReference type="EC" id="2.3.1.9"/>
<dbReference type="SMR" id="P14610"/>
<dbReference type="PeptideAtlas" id="P14610"/>
<dbReference type="InParanoid" id="P14610"/>
<dbReference type="Proteomes" id="UP000008227">
    <property type="component" value="Unplaced"/>
</dbReference>
<dbReference type="Proteomes" id="UP000314985">
    <property type="component" value="Unplaced"/>
</dbReference>
<dbReference type="Proteomes" id="UP000694570">
    <property type="component" value="Unplaced"/>
</dbReference>
<dbReference type="Proteomes" id="UP000694571">
    <property type="component" value="Unplaced"/>
</dbReference>
<dbReference type="Proteomes" id="UP000694720">
    <property type="component" value="Unplaced"/>
</dbReference>
<dbReference type="Proteomes" id="UP000694722">
    <property type="component" value="Unplaced"/>
</dbReference>
<dbReference type="Proteomes" id="UP000694723">
    <property type="component" value="Unplaced"/>
</dbReference>
<dbReference type="Proteomes" id="UP000694724">
    <property type="component" value="Unplaced"/>
</dbReference>
<dbReference type="Proteomes" id="UP000694725">
    <property type="component" value="Unplaced"/>
</dbReference>
<dbReference type="Proteomes" id="UP000694726">
    <property type="component" value="Unplaced"/>
</dbReference>
<dbReference type="Proteomes" id="UP000694727">
    <property type="component" value="Unplaced"/>
</dbReference>
<dbReference type="Proteomes" id="UP000694728">
    <property type="component" value="Unplaced"/>
</dbReference>
<dbReference type="GO" id="GO:0005739">
    <property type="term" value="C:mitochondrion"/>
    <property type="evidence" value="ECO:0007669"/>
    <property type="project" value="UniProtKB-SubCell"/>
</dbReference>
<dbReference type="GO" id="GO:0003985">
    <property type="term" value="F:acetyl-CoA C-acetyltransferase activity"/>
    <property type="evidence" value="ECO:0007669"/>
    <property type="project" value="UniProtKB-EC"/>
</dbReference>
<proteinExistence type="evidence at protein level"/>
<protein>
    <recommendedName>
        <fullName>Acetyl-CoA acetyltransferase</fullName>
        <ecNumber>2.3.1.9</ecNumber>
    </recommendedName>
    <alternativeName>
        <fullName>Acetoacetyl-CoA thiolase</fullName>
    </alternativeName>
</protein>
<name>THIL_PIG</name>
<accession>P14610</accession>
<organism>
    <name type="scientific">Sus scrofa</name>
    <name type="common">Pig</name>
    <dbReference type="NCBI Taxonomy" id="9823"/>
    <lineage>
        <taxon>Eukaryota</taxon>
        <taxon>Metazoa</taxon>
        <taxon>Chordata</taxon>
        <taxon>Craniata</taxon>
        <taxon>Vertebrata</taxon>
        <taxon>Euteleostomi</taxon>
        <taxon>Mammalia</taxon>
        <taxon>Eutheria</taxon>
        <taxon>Laurasiatheria</taxon>
        <taxon>Artiodactyla</taxon>
        <taxon>Suina</taxon>
        <taxon>Suidae</taxon>
        <taxon>Sus</taxon>
    </lineage>
</organism>
<sequence length="26" mass="2561">QAVLGAGLPCNTTTSPIIKVCASGMK</sequence>
<feature type="chain" id="PRO_0000206408" description="Acetyl-CoA acetyltransferase">
    <location>
        <begin position="1" status="less than"/>
        <end position="26" status="greater than"/>
    </location>
</feature>
<feature type="active site" description="Acyl-thioester intermediate" evidence="1">
    <location>
        <position position="21"/>
    </location>
</feature>
<feature type="non-terminal residue">
    <location>
        <position position="1"/>
    </location>
</feature>
<feature type="non-terminal residue">
    <location>
        <position position="26"/>
    </location>
</feature>
<evidence type="ECO:0000250" key="1"/>
<evidence type="ECO:0000255" key="2">
    <source>
        <dbReference type="PROSITE-ProRule" id="PRU10020"/>
    </source>
</evidence>
<evidence type="ECO:0000305" key="3"/>
<reference key="1">
    <citation type="journal article" date="1970" name="Eur. J. Biochem.">
        <title>The active site cysteines of thiolase.</title>
        <authorList>
            <person name="Gehring U."/>
            <person name="Harris J.I."/>
        </authorList>
    </citation>
    <scope>PROTEIN SEQUENCE</scope>
    <source>
        <tissue>Heart</tissue>
    </source>
</reference>
<comment type="catalytic activity">
    <reaction evidence="2">
        <text>2 acetyl-CoA = acetoacetyl-CoA + CoA</text>
        <dbReference type="Rhea" id="RHEA:21036"/>
        <dbReference type="ChEBI" id="CHEBI:57286"/>
        <dbReference type="ChEBI" id="CHEBI:57287"/>
        <dbReference type="ChEBI" id="CHEBI:57288"/>
        <dbReference type="EC" id="2.3.1.9"/>
    </reaction>
</comment>
<comment type="subunit">
    <text>Homotetramer.</text>
</comment>
<comment type="subcellular location">
    <subcellularLocation>
        <location>Mitochondrion</location>
    </subcellularLocation>
</comment>
<comment type="PTM">
    <text evidence="1">Succinylation, adjacent to a coenzyme A binding site. Desuccinylated by SIRT5 (By similarity).</text>
</comment>
<comment type="similarity">
    <text evidence="3">Belongs to the thiolase-like superfamily. Thiolase family.</text>
</comment>